<name>GLGB_ECOLI</name>
<sequence>MSDRIDRDVINALIAGHFADPFSVLGMHKTTAGLEVRALLPDATDVWVIEPKTGRKLAKLECLDSRGFFSGVIPRRKNFFRYQLAVVWHGQQNLIDDPYRFGPLIQEMDAWLLSEGTHLRPYETLGAHADTMDGVTGTRFSVWAPNARRVSVVGQFNYWDGRRHPMRLRKESGIWELFIPGAHNGQLYKYEMIDANGNLRLKSDPYAFEAQMRPETASLICGLPEKVVQTEERKKANQFDAPISIYEVHLGSWRRHTDNNFWLSYRELADQLVPYAKWMGFTHLELLPINEHPFDGSWGYQPTGLYAPTRRFGTRDDFRYFIDAAHAAGLNVILDWVPGHFPTDDFALAEFDGTNLYEHSDPREGYHQDWNTLIYNYGRREVSNFLVGNALYWIERFGIDALRVDAVASMIYRDYSRKEGEWIPNEFGGRENLEAIEFLRNTNRILGEQVSGAVTMAEESTDFPGVSRPQDMGGLGFWYKWNLGWMHDTLDYMKLDPVYRQYHHDKLTFGILYNYTENFVLPLSHDEVVHGKKSILDRMPGDAWQKFANLRAYYGWMWAFPGKKLLFMGNEFAQGREWNHDASLDWHLLEGGDNWHHGVQRLVRDLNLTYRHHKAMHELDFDPYGFEWLVVDDKERSVLIFVRRDKEGNEIIVASNFTPVPRHDYRFGINQPGKWREILNTDSMHYHGSNAGNGGTVHSDEIASHGRQHSLSLTLPPLATIWLVREAE</sequence>
<organism>
    <name type="scientific">Escherichia coli (strain K12)</name>
    <dbReference type="NCBI Taxonomy" id="83333"/>
    <lineage>
        <taxon>Bacteria</taxon>
        <taxon>Pseudomonadati</taxon>
        <taxon>Pseudomonadota</taxon>
        <taxon>Gammaproteobacteria</taxon>
        <taxon>Enterobacterales</taxon>
        <taxon>Enterobacteriaceae</taxon>
        <taxon>Escherichia</taxon>
    </lineage>
</organism>
<dbReference type="EC" id="2.4.1.18"/>
<dbReference type="EMBL" id="M13751">
    <property type="protein sequence ID" value="AAA23872.1"/>
    <property type="molecule type" value="Genomic_DNA"/>
</dbReference>
<dbReference type="EMBL" id="U18997">
    <property type="protein sequence ID" value="AAA58230.1"/>
    <property type="molecule type" value="Genomic_DNA"/>
</dbReference>
<dbReference type="EMBL" id="U00096">
    <property type="protein sequence ID" value="AAC76457.1"/>
    <property type="molecule type" value="Genomic_DNA"/>
</dbReference>
<dbReference type="EMBL" id="AP009048">
    <property type="protein sequence ID" value="BAE77860.1"/>
    <property type="molecule type" value="Genomic_DNA"/>
</dbReference>
<dbReference type="PIR" id="A25498">
    <property type="entry name" value="NQECA"/>
</dbReference>
<dbReference type="RefSeq" id="NP_417890.1">
    <property type="nucleotide sequence ID" value="NC_000913.3"/>
</dbReference>
<dbReference type="RefSeq" id="WP_001283723.1">
    <property type="nucleotide sequence ID" value="NZ_STEB01000004.1"/>
</dbReference>
<dbReference type="PDB" id="1M7X">
    <property type="method" value="X-ray"/>
    <property type="resolution" value="2.30 A"/>
    <property type="chains" value="A/B/C/D=113-728"/>
</dbReference>
<dbReference type="PDB" id="4LPC">
    <property type="method" value="X-ray"/>
    <property type="resolution" value="2.39 A"/>
    <property type="chains" value="A/B/C/D=117-728"/>
</dbReference>
<dbReference type="PDB" id="4LQ1">
    <property type="method" value="X-ray"/>
    <property type="resolution" value="2.55 A"/>
    <property type="chains" value="A/B/C/D=117-728"/>
</dbReference>
<dbReference type="PDB" id="5E6Y">
    <property type="method" value="X-ray"/>
    <property type="resolution" value="2.60 A"/>
    <property type="chains" value="A/B/C/D=117-728"/>
</dbReference>
<dbReference type="PDB" id="5E6Z">
    <property type="method" value="X-ray"/>
    <property type="resolution" value="1.88 A"/>
    <property type="chains" value="A/B/C/D=117-728"/>
</dbReference>
<dbReference type="PDB" id="5E70">
    <property type="method" value="X-ray"/>
    <property type="resolution" value="2.33 A"/>
    <property type="chains" value="A/B/C/D=117-728"/>
</dbReference>
<dbReference type="PDB" id="8SDB">
    <property type="method" value="X-ray"/>
    <property type="resolution" value="3.00 A"/>
    <property type="chains" value="A/B/C/D=116-728"/>
</dbReference>
<dbReference type="PDBsum" id="1M7X"/>
<dbReference type="PDBsum" id="4LPC"/>
<dbReference type="PDBsum" id="4LQ1"/>
<dbReference type="PDBsum" id="5E6Y"/>
<dbReference type="PDBsum" id="5E6Z"/>
<dbReference type="PDBsum" id="5E70"/>
<dbReference type="PDBsum" id="8SDB"/>
<dbReference type="SMR" id="P07762"/>
<dbReference type="BioGRID" id="4262503">
    <property type="interactions" value="325"/>
</dbReference>
<dbReference type="FunCoup" id="P07762">
    <property type="interactions" value="730"/>
</dbReference>
<dbReference type="IntAct" id="P07762">
    <property type="interactions" value="13"/>
</dbReference>
<dbReference type="STRING" id="511145.b3432"/>
<dbReference type="CAZy" id="CBM48">
    <property type="family name" value="Carbohydrate-Binding Module Family 48"/>
</dbReference>
<dbReference type="CAZy" id="GH13">
    <property type="family name" value="Glycoside Hydrolase Family 13"/>
</dbReference>
<dbReference type="jPOST" id="P07762"/>
<dbReference type="PaxDb" id="511145-b3432"/>
<dbReference type="EnsemblBacteria" id="AAC76457">
    <property type="protein sequence ID" value="AAC76457"/>
    <property type="gene ID" value="b3432"/>
</dbReference>
<dbReference type="GeneID" id="93778557"/>
<dbReference type="GeneID" id="947940"/>
<dbReference type="KEGG" id="ecj:JW3395"/>
<dbReference type="KEGG" id="eco:b3432"/>
<dbReference type="KEGG" id="ecoc:C3026_18605"/>
<dbReference type="PATRIC" id="fig|1411691.4.peg.3296"/>
<dbReference type="EchoBASE" id="EB0373"/>
<dbReference type="eggNOG" id="COG0296">
    <property type="taxonomic scope" value="Bacteria"/>
</dbReference>
<dbReference type="HOGENOM" id="CLU_004245_3_2_6"/>
<dbReference type="InParanoid" id="P07762"/>
<dbReference type="OMA" id="YEMHLGS"/>
<dbReference type="OrthoDB" id="9800174at2"/>
<dbReference type="PhylomeDB" id="P07762"/>
<dbReference type="BioCyc" id="EcoCyc:GLYCOGEN-BRANCH-MONOMER"/>
<dbReference type="BioCyc" id="MetaCyc:GLYCOGEN-BRANCH-MONOMER"/>
<dbReference type="BRENDA" id="2.4.1.18">
    <property type="organism ID" value="2026"/>
</dbReference>
<dbReference type="UniPathway" id="UPA00164"/>
<dbReference type="EvolutionaryTrace" id="P07762"/>
<dbReference type="PRO" id="PR:P07762"/>
<dbReference type="Proteomes" id="UP000000625">
    <property type="component" value="Chromosome"/>
</dbReference>
<dbReference type="GO" id="GO:0005737">
    <property type="term" value="C:cytoplasm"/>
    <property type="evidence" value="ECO:0000318"/>
    <property type="project" value="GO_Central"/>
</dbReference>
<dbReference type="GO" id="GO:0005829">
    <property type="term" value="C:cytosol"/>
    <property type="evidence" value="ECO:0000314"/>
    <property type="project" value="EcoCyc"/>
</dbReference>
<dbReference type="GO" id="GO:0003844">
    <property type="term" value="F:1,4-alpha-glucan branching enzyme activity"/>
    <property type="evidence" value="ECO:0000314"/>
    <property type="project" value="EcoCyc"/>
</dbReference>
<dbReference type="GO" id="GO:0043169">
    <property type="term" value="F:cation binding"/>
    <property type="evidence" value="ECO:0007669"/>
    <property type="project" value="InterPro"/>
</dbReference>
<dbReference type="GO" id="GO:0004553">
    <property type="term" value="F:hydrolase activity, hydrolyzing O-glycosyl compounds"/>
    <property type="evidence" value="ECO:0007669"/>
    <property type="project" value="InterPro"/>
</dbReference>
<dbReference type="GO" id="GO:0006974">
    <property type="term" value="P:DNA damage response"/>
    <property type="evidence" value="ECO:0000270"/>
    <property type="project" value="EcoliWiki"/>
</dbReference>
<dbReference type="GO" id="GO:0005978">
    <property type="term" value="P:glycogen biosynthetic process"/>
    <property type="evidence" value="ECO:0000315"/>
    <property type="project" value="EcoCyc"/>
</dbReference>
<dbReference type="CDD" id="cd11322">
    <property type="entry name" value="AmyAc_Glg_BE"/>
    <property type="match status" value="1"/>
</dbReference>
<dbReference type="CDD" id="cd02855">
    <property type="entry name" value="E_set_GBE_prok_N"/>
    <property type="match status" value="1"/>
</dbReference>
<dbReference type="FunFam" id="2.60.40.10:FF:000169">
    <property type="entry name" value="1,4-alpha-glucan branching enzyme GlgB"/>
    <property type="match status" value="1"/>
</dbReference>
<dbReference type="FunFam" id="2.60.40.10:FF:000331">
    <property type="entry name" value="1,4-alpha-glucan branching enzyme GlgB"/>
    <property type="match status" value="1"/>
</dbReference>
<dbReference type="FunFam" id="2.60.40.1180:FF:000002">
    <property type="entry name" value="1,4-alpha-glucan branching enzyme GlgB"/>
    <property type="match status" value="1"/>
</dbReference>
<dbReference type="FunFam" id="3.20.20.80:FF:000003">
    <property type="entry name" value="1,4-alpha-glucan branching enzyme GlgB"/>
    <property type="match status" value="1"/>
</dbReference>
<dbReference type="Gene3D" id="3.20.20.80">
    <property type="entry name" value="Glycosidases"/>
    <property type="match status" value="1"/>
</dbReference>
<dbReference type="Gene3D" id="2.60.40.1180">
    <property type="entry name" value="Golgi alpha-mannosidase II"/>
    <property type="match status" value="1"/>
</dbReference>
<dbReference type="Gene3D" id="2.60.40.10">
    <property type="entry name" value="Immunoglobulins"/>
    <property type="match status" value="2"/>
</dbReference>
<dbReference type="HAMAP" id="MF_00685">
    <property type="entry name" value="GlgB"/>
    <property type="match status" value="1"/>
</dbReference>
<dbReference type="InterPro" id="IPR006048">
    <property type="entry name" value="A-amylase/branching_C"/>
</dbReference>
<dbReference type="InterPro" id="IPR037439">
    <property type="entry name" value="Branching_enzy"/>
</dbReference>
<dbReference type="InterPro" id="IPR006407">
    <property type="entry name" value="GlgB"/>
</dbReference>
<dbReference type="InterPro" id="IPR054169">
    <property type="entry name" value="GlgB_N"/>
</dbReference>
<dbReference type="InterPro" id="IPR044143">
    <property type="entry name" value="GlgB_N_E_set_prok"/>
</dbReference>
<dbReference type="InterPro" id="IPR006047">
    <property type="entry name" value="Glyco_hydro_13_cat_dom"/>
</dbReference>
<dbReference type="InterPro" id="IPR004193">
    <property type="entry name" value="Glyco_hydro_13_N"/>
</dbReference>
<dbReference type="InterPro" id="IPR013780">
    <property type="entry name" value="Glyco_hydro_b"/>
</dbReference>
<dbReference type="InterPro" id="IPR017853">
    <property type="entry name" value="Glycoside_hydrolase_SF"/>
</dbReference>
<dbReference type="InterPro" id="IPR013783">
    <property type="entry name" value="Ig-like_fold"/>
</dbReference>
<dbReference type="InterPro" id="IPR014756">
    <property type="entry name" value="Ig_E-set"/>
</dbReference>
<dbReference type="NCBIfam" id="TIGR01515">
    <property type="entry name" value="branching_enzym"/>
    <property type="match status" value="1"/>
</dbReference>
<dbReference type="NCBIfam" id="NF003811">
    <property type="entry name" value="PRK05402.1"/>
    <property type="match status" value="1"/>
</dbReference>
<dbReference type="NCBIfam" id="NF008967">
    <property type="entry name" value="PRK12313.1"/>
    <property type="match status" value="1"/>
</dbReference>
<dbReference type="PANTHER" id="PTHR43651">
    <property type="entry name" value="1,4-ALPHA-GLUCAN-BRANCHING ENZYME"/>
    <property type="match status" value="1"/>
</dbReference>
<dbReference type="PANTHER" id="PTHR43651:SF3">
    <property type="entry name" value="1,4-ALPHA-GLUCAN-BRANCHING ENZYME"/>
    <property type="match status" value="1"/>
</dbReference>
<dbReference type="Pfam" id="PF00128">
    <property type="entry name" value="Alpha-amylase"/>
    <property type="match status" value="1"/>
</dbReference>
<dbReference type="Pfam" id="PF02806">
    <property type="entry name" value="Alpha-amylase_C"/>
    <property type="match status" value="1"/>
</dbReference>
<dbReference type="Pfam" id="PF02922">
    <property type="entry name" value="CBM_48"/>
    <property type="match status" value="1"/>
</dbReference>
<dbReference type="Pfam" id="PF22019">
    <property type="entry name" value="GlgB_N"/>
    <property type="match status" value="1"/>
</dbReference>
<dbReference type="PIRSF" id="PIRSF000463">
    <property type="entry name" value="GlgB"/>
    <property type="match status" value="1"/>
</dbReference>
<dbReference type="SMART" id="SM00642">
    <property type="entry name" value="Aamy"/>
    <property type="match status" value="1"/>
</dbReference>
<dbReference type="SUPFAM" id="SSF51445">
    <property type="entry name" value="(Trans)glycosidases"/>
    <property type="match status" value="1"/>
</dbReference>
<dbReference type="SUPFAM" id="SSF81296">
    <property type="entry name" value="E set domains"/>
    <property type="match status" value="2"/>
</dbReference>
<dbReference type="SUPFAM" id="SSF51011">
    <property type="entry name" value="Glycosyl hydrolase domain"/>
    <property type="match status" value="1"/>
</dbReference>
<comment type="function">
    <text evidence="1">Catalyzes the formation of the alpha-1,6-glucosidic linkages in glycogen by scission of a 1,4-alpha-linked oligosaccharide from growing alpha-1,4-glucan chains and the subsequent attachment of the oligosaccharide to the alpha-1,6 position.</text>
</comment>
<comment type="catalytic activity">
    <reaction>
        <text>Transfers a segment of a (1-&gt;4)-alpha-D-glucan chain to a primary hydroxy group in a similar glucan chain.</text>
        <dbReference type="EC" id="2.4.1.18"/>
    </reaction>
</comment>
<comment type="pathway">
    <text>Glycan biosynthesis; glycogen biosynthesis.</text>
</comment>
<comment type="subunit">
    <text>Monomer.</text>
</comment>
<comment type="similarity">
    <text evidence="2">Belongs to the glycosyl hydrolase 13 family. GlgB subfamily.</text>
</comment>
<evidence type="ECO:0000250" key="1"/>
<evidence type="ECO:0000305" key="2"/>
<evidence type="ECO:0007829" key="3">
    <source>
        <dbReference type="PDB" id="1M7X"/>
    </source>
</evidence>
<evidence type="ECO:0007829" key="4">
    <source>
        <dbReference type="PDB" id="4LPC"/>
    </source>
</evidence>
<evidence type="ECO:0007829" key="5">
    <source>
        <dbReference type="PDB" id="4LQ1"/>
    </source>
</evidence>
<evidence type="ECO:0007829" key="6">
    <source>
        <dbReference type="PDB" id="8SDB"/>
    </source>
</evidence>
<protein>
    <recommendedName>
        <fullName>1,4-alpha-glucan branching enzyme GlgB</fullName>
        <ecNumber>2.4.1.18</ecNumber>
    </recommendedName>
    <alternativeName>
        <fullName>1,4-alpha-D-glucan:1,4-alpha-D-glucan 6-glucosyl-transferase</fullName>
    </alternativeName>
    <alternativeName>
        <fullName>Alpha-(1-&gt;4)-glucan branching enzyme</fullName>
    </alternativeName>
    <alternativeName>
        <fullName>Glycogen branching enzyme</fullName>
        <shortName>BE</shortName>
    </alternativeName>
</protein>
<reference key="1">
    <citation type="journal article" date="1986" name="J. Biol. Chem.">
        <title>Biosynthesis of bacterial glycogen. Primary structure of Escherichia coli 1,4-alpha-D-glucan:1,4-alpha-D-glucan 6-alpha-D-(1,4-alpha-D-glucano)-transferase as deduced from the nucleotide sequence of the glg B gene.</title>
        <authorList>
            <person name="Baecker P.A."/>
            <person name="Greenberg E."/>
            <person name="Preiss J."/>
        </authorList>
    </citation>
    <scope>NUCLEOTIDE SEQUENCE [GENOMIC DNA]</scope>
</reference>
<reference key="2">
    <citation type="journal article" date="1997" name="Science">
        <title>The complete genome sequence of Escherichia coli K-12.</title>
        <authorList>
            <person name="Blattner F.R."/>
            <person name="Plunkett G. III"/>
            <person name="Bloch C.A."/>
            <person name="Perna N.T."/>
            <person name="Burland V."/>
            <person name="Riley M."/>
            <person name="Collado-Vides J."/>
            <person name="Glasner J.D."/>
            <person name="Rode C.K."/>
            <person name="Mayhew G.F."/>
            <person name="Gregor J."/>
            <person name="Davis N.W."/>
            <person name="Kirkpatrick H.A."/>
            <person name="Goeden M.A."/>
            <person name="Rose D.J."/>
            <person name="Mau B."/>
            <person name="Shao Y."/>
        </authorList>
    </citation>
    <scope>NUCLEOTIDE SEQUENCE [LARGE SCALE GENOMIC DNA]</scope>
    <source>
        <strain>K12 / MG1655 / ATCC 47076</strain>
    </source>
</reference>
<reference key="3">
    <citation type="journal article" date="2006" name="Mol. Syst. Biol.">
        <title>Highly accurate genome sequences of Escherichia coli K-12 strains MG1655 and W3110.</title>
        <authorList>
            <person name="Hayashi K."/>
            <person name="Morooka N."/>
            <person name="Yamamoto Y."/>
            <person name="Fujita K."/>
            <person name="Isono K."/>
            <person name="Choi S."/>
            <person name="Ohtsubo E."/>
            <person name="Baba T."/>
            <person name="Wanner B.L."/>
            <person name="Mori H."/>
            <person name="Horiuchi T."/>
        </authorList>
    </citation>
    <scope>NUCLEOTIDE SEQUENCE [LARGE SCALE GENOMIC DNA]</scope>
    <source>
        <strain>K12 / W3110 / ATCC 27325 / DSM 5911</strain>
    </source>
</reference>
<reference key="4">
    <citation type="journal article" date="2002" name="J. Biol. Chem.">
        <title>The X-ray crystallographic structure of Escherichia coli branching enzyme.</title>
        <authorList>
            <person name="Abad M.C."/>
            <person name="Binderup K."/>
            <person name="Rios-Steiner J."/>
            <person name="Arni R.K."/>
            <person name="Preiss J."/>
            <person name="Geiger J.H."/>
        </authorList>
    </citation>
    <scope>X-RAY CRYSTALLOGRAPHY (2.3 ANGSTROMS) OF 113-728</scope>
</reference>
<gene>
    <name type="primary">glgB</name>
    <name type="ordered locus">b3432</name>
    <name type="ordered locus">JW3395</name>
</gene>
<accession>P07762</accession>
<accession>Q2M796</accession>
<proteinExistence type="evidence at protein level"/>
<keyword id="KW-0002">3D-structure</keyword>
<keyword id="KW-0119">Carbohydrate metabolism</keyword>
<keyword id="KW-0320">Glycogen biosynthesis</keyword>
<keyword id="KW-0321">Glycogen metabolism</keyword>
<keyword id="KW-0328">Glycosyltransferase</keyword>
<keyword id="KW-1185">Reference proteome</keyword>
<keyword id="KW-0808">Transferase</keyword>
<feature type="chain" id="PRO_0000188702" description="1,4-alpha-glucan branching enzyme GlgB">
    <location>
        <begin position="1"/>
        <end position="728"/>
    </location>
</feature>
<feature type="active site" description="Nucleophile" evidence="1">
    <location>
        <position position="405"/>
    </location>
</feature>
<feature type="active site" description="Proton donor" evidence="1">
    <location>
        <position position="458"/>
    </location>
</feature>
<feature type="helix" evidence="3">
    <location>
        <begin position="121"/>
        <end position="123"/>
    </location>
</feature>
<feature type="strand" evidence="3">
    <location>
        <begin position="125"/>
        <end position="134"/>
    </location>
</feature>
<feature type="strand" evidence="3">
    <location>
        <begin position="136"/>
        <end position="143"/>
    </location>
</feature>
<feature type="strand" evidence="5">
    <location>
        <begin position="145"/>
        <end position="148"/>
    </location>
</feature>
<feature type="strand" evidence="3">
    <location>
        <begin position="150"/>
        <end position="154"/>
    </location>
</feature>
<feature type="helix" evidence="3">
    <location>
        <begin position="155"/>
        <end position="157"/>
    </location>
</feature>
<feature type="turn" evidence="3">
    <location>
        <begin position="161"/>
        <end position="163"/>
    </location>
</feature>
<feature type="strand" evidence="6">
    <location>
        <begin position="167"/>
        <end position="169"/>
    </location>
</feature>
<feature type="turn" evidence="3">
    <location>
        <begin position="170"/>
        <end position="172"/>
    </location>
</feature>
<feature type="strand" evidence="3">
    <location>
        <begin position="174"/>
        <end position="180"/>
    </location>
</feature>
<feature type="strand" evidence="3">
    <location>
        <begin position="187"/>
        <end position="193"/>
    </location>
</feature>
<feature type="strand" evidence="3">
    <location>
        <begin position="199"/>
        <end position="202"/>
    </location>
</feature>
<feature type="strand" evidence="3">
    <location>
        <begin position="208"/>
        <end position="211"/>
    </location>
</feature>
<feature type="turn" evidence="3">
    <location>
        <begin position="213"/>
        <end position="215"/>
    </location>
</feature>
<feature type="strand" evidence="3">
    <location>
        <begin position="217"/>
        <end position="219"/>
    </location>
</feature>
<feature type="helix" evidence="3">
    <location>
        <begin position="231"/>
        <end position="237"/>
    </location>
</feature>
<feature type="strand" evidence="3">
    <location>
        <begin position="244"/>
        <end position="248"/>
    </location>
</feature>
<feature type="turn" evidence="4">
    <location>
        <begin position="250"/>
        <end position="252"/>
    </location>
</feature>
<feature type="turn" evidence="3">
    <location>
        <begin position="257"/>
        <end position="259"/>
    </location>
</feature>
<feature type="helix" evidence="3">
    <location>
        <begin position="265"/>
        <end position="278"/>
    </location>
</feature>
<feature type="strand" evidence="3">
    <location>
        <begin position="282"/>
        <end position="287"/>
    </location>
</feature>
<feature type="helix" evidence="3">
    <location>
        <begin position="295"/>
        <end position="297"/>
    </location>
</feature>
<feature type="strand" evidence="3">
    <location>
        <begin position="303"/>
        <end position="308"/>
    </location>
</feature>
<feature type="helix" evidence="3">
    <location>
        <begin position="310"/>
        <end position="312"/>
    </location>
</feature>
<feature type="helix" evidence="3">
    <location>
        <begin position="315"/>
        <end position="327"/>
    </location>
</feature>
<feature type="strand" evidence="3">
    <location>
        <begin position="331"/>
        <end position="336"/>
    </location>
</feature>
<feature type="strand" evidence="5">
    <location>
        <begin position="338"/>
        <end position="340"/>
    </location>
</feature>
<feature type="helix" evidence="3">
    <location>
        <begin position="351"/>
        <end position="353"/>
    </location>
</feature>
<feature type="strand" evidence="3">
    <location>
        <begin position="356"/>
        <end position="358"/>
    </location>
</feature>
<feature type="helix" evidence="3">
    <location>
        <begin position="380"/>
        <end position="396"/>
    </location>
</feature>
<feature type="strand" evidence="3">
    <location>
        <begin position="401"/>
        <end position="404"/>
    </location>
</feature>
<feature type="helix" evidence="3">
    <location>
        <begin position="408"/>
        <end position="411"/>
    </location>
</feature>
<feature type="helix" evidence="3">
    <location>
        <begin position="433"/>
        <end position="448"/>
    </location>
</feature>
<feature type="strand" evidence="3">
    <location>
        <begin position="454"/>
        <end position="457"/>
    </location>
</feature>
<feature type="turn" evidence="3">
    <location>
        <begin position="464"/>
        <end position="467"/>
    </location>
</feature>
<feature type="turn" evidence="3">
    <location>
        <begin position="470"/>
        <end position="473"/>
    </location>
</feature>
<feature type="strand" evidence="3">
    <location>
        <begin position="478"/>
        <end position="481"/>
    </location>
</feature>
<feature type="helix" evidence="3">
    <location>
        <begin position="483"/>
        <end position="494"/>
    </location>
</feature>
<feature type="helix" evidence="3">
    <location>
        <begin position="497"/>
        <end position="502"/>
    </location>
</feature>
<feature type="helix" evidence="3">
    <location>
        <begin position="505"/>
        <end position="508"/>
    </location>
</feature>
<feature type="helix" evidence="3">
    <location>
        <begin position="509"/>
        <end position="511"/>
    </location>
</feature>
<feature type="turn" evidence="3">
    <location>
        <begin position="512"/>
        <end position="516"/>
    </location>
</feature>
<feature type="strand" evidence="3">
    <location>
        <begin position="519"/>
        <end position="523"/>
    </location>
</feature>
<feature type="helix" evidence="3">
    <location>
        <begin position="525"/>
        <end position="527"/>
    </location>
</feature>
<feature type="helix" evidence="3">
    <location>
        <begin position="535"/>
        <end position="538"/>
    </location>
</feature>
<feature type="helix" evidence="3">
    <location>
        <begin position="543"/>
        <end position="559"/>
    </location>
</feature>
<feature type="strand" evidence="3">
    <location>
        <begin position="560"/>
        <end position="567"/>
    </location>
</feature>
<feature type="turn" evidence="3">
    <location>
        <begin position="568"/>
        <end position="573"/>
    </location>
</feature>
<feature type="helix" evidence="3">
    <location>
        <begin position="586"/>
        <end position="589"/>
    </location>
</feature>
<feature type="strand" evidence="5">
    <location>
        <begin position="591"/>
        <end position="593"/>
    </location>
</feature>
<feature type="helix" evidence="3">
    <location>
        <begin position="595"/>
        <end position="610"/>
    </location>
</feature>
<feature type="helix" evidence="3">
    <location>
        <begin position="614"/>
        <end position="616"/>
    </location>
</feature>
<feature type="turn" evidence="4">
    <location>
        <begin position="617"/>
        <end position="621"/>
    </location>
</feature>
<feature type="helix" evidence="3">
    <location>
        <begin position="623"/>
        <end position="625"/>
    </location>
</feature>
<feature type="strand" evidence="3">
    <location>
        <begin position="626"/>
        <end position="633"/>
    </location>
</feature>
<feature type="turn" evidence="3">
    <location>
        <begin position="634"/>
        <end position="637"/>
    </location>
</feature>
<feature type="strand" evidence="3">
    <location>
        <begin position="638"/>
        <end position="644"/>
    </location>
</feature>
<feature type="strand" evidence="3">
    <location>
        <begin position="650"/>
        <end position="656"/>
    </location>
</feature>
<feature type="strand" evidence="4">
    <location>
        <begin position="658"/>
        <end position="660"/>
    </location>
</feature>
<feature type="strand" evidence="3">
    <location>
        <begin position="662"/>
        <end position="665"/>
    </location>
</feature>
<feature type="strand" evidence="3">
    <location>
        <begin position="673"/>
        <end position="680"/>
    </location>
</feature>
<feature type="helix" evidence="3">
    <location>
        <begin position="685"/>
        <end position="687"/>
    </location>
</feature>
<feature type="strand" evidence="3">
    <location>
        <begin position="713"/>
        <end position="715"/>
    </location>
</feature>
<feature type="strand" evidence="3">
    <location>
        <begin position="719"/>
        <end position="726"/>
    </location>
</feature>